<dbReference type="EMBL" id="BC087050">
    <property type="protein sequence ID" value="AAH87050.1"/>
    <property type="status" value="ALT_INIT"/>
    <property type="molecule type" value="mRNA"/>
</dbReference>
<dbReference type="RefSeq" id="NP_001009659.2">
    <property type="nucleotide sequence ID" value="NM_001009659.2"/>
</dbReference>
<dbReference type="SMR" id="Q5PQS7"/>
<dbReference type="FunCoup" id="Q5PQS7">
    <property type="interactions" value="2083"/>
</dbReference>
<dbReference type="STRING" id="10116.ENSRNOP00000013498"/>
<dbReference type="iPTMnet" id="Q5PQS7"/>
<dbReference type="PhosphoSitePlus" id="Q5PQS7"/>
<dbReference type="PaxDb" id="10116-ENSRNOP00000013498"/>
<dbReference type="GeneID" id="297458"/>
<dbReference type="KEGG" id="rno:297458"/>
<dbReference type="AGR" id="RGD:1305225"/>
<dbReference type="CTD" id="51244"/>
<dbReference type="RGD" id="1305225">
    <property type="gene designation" value="Ccdc174"/>
</dbReference>
<dbReference type="eggNOG" id="ENOG502QWJ9">
    <property type="taxonomic scope" value="Eukaryota"/>
</dbReference>
<dbReference type="InParanoid" id="Q5PQS7"/>
<dbReference type="OrthoDB" id="333551at2759"/>
<dbReference type="PhylomeDB" id="Q5PQS7"/>
<dbReference type="PRO" id="PR:Q5PQS7"/>
<dbReference type="Proteomes" id="UP000002494">
    <property type="component" value="Unplaced"/>
</dbReference>
<dbReference type="GO" id="GO:0005634">
    <property type="term" value="C:nucleus"/>
    <property type="evidence" value="ECO:0000250"/>
    <property type="project" value="UniProtKB"/>
</dbReference>
<dbReference type="InterPro" id="IPR025066">
    <property type="entry name" value="CCDC174-like"/>
</dbReference>
<dbReference type="PANTHER" id="PTHR15885">
    <property type="entry name" value="COILED-COIL DOMAIN-CONTAINING PROTEIN 174"/>
    <property type="match status" value="1"/>
</dbReference>
<dbReference type="PANTHER" id="PTHR15885:SF1">
    <property type="entry name" value="COILED-COIL DOMAIN-CONTAINING PROTEIN 174"/>
    <property type="match status" value="1"/>
</dbReference>
<dbReference type="Pfam" id="PF25449">
    <property type="entry name" value="CCDC174_GRSR"/>
    <property type="match status" value="1"/>
</dbReference>
<dbReference type="Pfam" id="PF13300">
    <property type="entry name" value="DUF4078"/>
    <property type="match status" value="1"/>
</dbReference>
<accession>Q5PQS7</accession>
<keyword id="KW-0175">Coiled coil</keyword>
<keyword id="KW-0539">Nucleus</keyword>
<keyword id="KW-0597">Phosphoprotein</keyword>
<keyword id="KW-1185">Reference proteome</keyword>
<name>CC174_RAT</name>
<sequence>MDRKKKPLDVTASSLVDLKAELFRKQEEFKQEKLLKDSGVFGKPKTSNKKPSIWSKQNAGVSSRAEKDAEQKLEEQKTLDKSREKLEEKAKLYEKMTKGDFLDEEVEDMYLVDFTQKIIDKRKEMEVLGATRDSRIKEERDAAVAAANDDDDEEEFSEKDIPPPQDPSEEWVDYVDSLGRSRRCMRKDLPSLLEMDKNLQGRLFVSPANEKTLLSEDMRKELQRQQWEEEEREALKKPMGPIHYEDIRENEARQLGVGYFAFARDKELRNKQMKTLEMLREQTTDQRIKRENIKEKRKAILEARLAKLRQKKMKKSKVDGTEEESRADGVVTEPSEPKSVPAPPPVAQSSKVEVIIQERKDSKPGVPHIREWDRGKDFSFGFWSKKQSELRAERDPEFAPPSNYFVGQKRTGSLSSQPWSRPGAAPSDLGHSSGQSQEPSSSHTSTPASESSPQAPTVTFQTLDDMISYYKQVT</sequence>
<comment type="function">
    <text evidence="1">Probably involved in neuronal development.</text>
</comment>
<comment type="subcellular location">
    <subcellularLocation>
        <location evidence="1">Nucleus</location>
    </subcellularLocation>
</comment>
<comment type="sequence caution" evidence="4">
    <conflict type="erroneous initiation">
        <sequence resource="EMBL-CDS" id="AAH87050"/>
    </conflict>
    <text>Truncated N-terminus.</text>
</comment>
<protein>
    <recommendedName>
        <fullName>Coiled-coil domain-containing protein 174</fullName>
    </recommendedName>
</protein>
<reference key="1">
    <citation type="journal article" date="2004" name="Genome Res.">
        <title>The status, quality, and expansion of the NIH full-length cDNA project: the Mammalian Gene Collection (MGC).</title>
        <authorList>
            <consortium name="The MGC Project Team"/>
        </authorList>
    </citation>
    <scope>NUCLEOTIDE SEQUENCE [LARGE SCALE MRNA]</scope>
    <source>
        <tissue>Testis</tissue>
    </source>
</reference>
<organism>
    <name type="scientific">Rattus norvegicus</name>
    <name type="common">Rat</name>
    <dbReference type="NCBI Taxonomy" id="10116"/>
    <lineage>
        <taxon>Eukaryota</taxon>
        <taxon>Metazoa</taxon>
        <taxon>Chordata</taxon>
        <taxon>Craniata</taxon>
        <taxon>Vertebrata</taxon>
        <taxon>Euteleostomi</taxon>
        <taxon>Mammalia</taxon>
        <taxon>Eutheria</taxon>
        <taxon>Euarchontoglires</taxon>
        <taxon>Glires</taxon>
        <taxon>Rodentia</taxon>
        <taxon>Myomorpha</taxon>
        <taxon>Muroidea</taxon>
        <taxon>Muridae</taxon>
        <taxon>Murinae</taxon>
        <taxon>Rattus</taxon>
    </lineage>
</organism>
<feature type="chain" id="PRO_0000251958" description="Coiled-coil domain-containing protein 174">
    <location>
        <begin position="1"/>
        <end position="474"/>
    </location>
</feature>
<feature type="region of interest" description="Disordered" evidence="3">
    <location>
        <begin position="39"/>
        <end position="86"/>
    </location>
</feature>
<feature type="region of interest" description="Disordered" evidence="3">
    <location>
        <begin position="129"/>
        <end position="170"/>
    </location>
</feature>
<feature type="region of interest" description="Disordered" evidence="3">
    <location>
        <begin position="309"/>
        <end position="372"/>
    </location>
</feature>
<feature type="region of interest" description="Disordered" evidence="3">
    <location>
        <begin position="389"/>
        <end position="461"/>
    </location>
</feature>
<feature type="coiled-coil region" evidence="2">
    <location>
        <begin position="64"/>
        <end position="98"/>
    </location>
</feature>
<feature type="coiled-coil region" evidence="2">
    <location>
        <begin position="276"/>
        <end position="317"/>
    </location>
</feature>
<feature type="compositionally biased region" description="Basic and acidic residues" evidence="3">
    <location>
        <begin position="64"/>
        <end position="86"/>
    </location>
</feature>
<feature type="compositionally biased region" description="Basic and acidic residues" evidence="3">
    <location>
        <begin position="129"/>
        <end position="142"/>
    </location>
</feature>
<feature type="compositionally biased region" description="Acidic residues" evidence="3">
    <location>
        <begin position="148"/>
        <end position="157"/>
    </location>
</feature>
<feature type="compositionally biased region" description="Basic and acidic residues" evidence="3">
    <location>
        <begin position="316"/>
        <end position="327"/>
    </location>
</feature>
<feature type="compositionally biased region" description="Basic and acidic residues" evidence="3">
    <location>
        <begin position="356"/>
        <end position="372"/>
    </location>
</feature>
<feature type="compositionally biased region" description="Polar residues" evidence="3">
    <location>
        <begin position="410"/>
        <end position="419"/>
    </location>
</feature>
<feature type="compositionally biased region" description="Low complexity" evidence="3">
    <location>
        <begin position="430"/>
        <end position="453"/>
    </location>
</feature>
<feature type="modified residue" description="Phosphoserine" evidence="1">
    <location>
        <position position="206"/>
    </location>
</feature>
<gene>
    <name type="primary">Ccdc174</name>
</gene>
<proteinExistence type="evidence at transcript level"/>
<evidence type="ECO:0000250" key="1">
    <source>
        <dbReference type="UniProtKB" id="Q6PII3"/>
    </source>
</evidence>
<evidence type="ECO:0000255" key="2"/>
<evidence type="ECO:0000256" key="3">
    <source>
        <dbReference type="SAM" id="MobiDB-lite"/>
    </source>
</evidence>
<evidence type="ECO:0000305" key="4"/>